<proteinExistence type="inferred from homology"/>
<protein>
    <recommendedName>
        <fullName evidence="1">3-isopropylmalate dehydrogenase</fullName>
        <ecNumber evidence="1">1.1.1.85</ecNumber>
    </recommendedName>
    <alternativeName>
        <fullName evidence="1">3-IPM-DH</fullName>
    </alternativeName>
    <alternativeName>
        <fullName evidence="1">Beta-IPM dehydrogenase</fullName>
        <shortName evidence="1">IMDH</shortName>
    </alternativeName>
</protein>
<name>LEU3_BIFLD</name>
<evidence type="ECO:0000255" key="1">
    <source>
        <dbReference type="HAMAP-Rule" id="MF_01035"/>
    </source>
</evidence>
<gene>
    <name evidence="1" type="primary">leuB</name>
    <name type="ordered locus">BLD_0981</name>
</gene>
<sequence>MAKTYKIAVIPGDGIGKEVTPWAQKALEKAAEGVADFEYENFDLGAERYLRDGAILPEDEEERIKANDAILLGAVGDPRIKAGILERGLLLKLRFDLDQYVNLRPSKLYKGVTSPLANPGDIDFVVVREGTEGLYCGAGGAVRRNTPQEVATEVSINTAYGVERVVRYAFKLAMKRKKHVTLVHKKNVLVNAGDMWQRIVDKVGEEYPEVTHDYQHIDAATIFLVSDPSRFDVILTDNLFGDILTDEAGSVVGGVGYSASGCINASDEFPSMFEPIHGSAPDIAGQNKANPTAAILSAAMLLEHLGFDDAAKKIHTAVEADIEELGSTVRSTDQVGKDILARM</sequence>
<keyword id="KW-0028">Amino-acid biosynthesis</keyword>
<keyword id="KW-0100">Branched-chain amino acid biosynthesis</keyword>
<keyword id="KW-0963">Cytoplasm</keyword>
<keyword id="KW-0432">Leucine biosynthesis</keyword>
<keyword id="KW-0460">Magnesium</keyword>
<keyword id="KW-0464">Manganese</keyword>
<keyword id="KW-0479">Metal-binding</keyword>
<keyword id="KW-0520">NAD</keyword>
<keyword id="KW-0560">Oxidoreductase</keyword>
<comment type="function">
    <text evidence="1">Catalyzes the oxidation of 3-carboxy-2-hydroxy-4-methylpentanoate (3-isopropylmalate) to 3-carboxy-4-methyl-2-oxopentanoate. The product decarboxylates to 4-methyl-2 oxopentanoate.</text>
</comment>
<comment type="catalytic activity">
    <reaction evidence="1">
        <text>(2R,3S)-3-isopropylmalate + NAD(+) = 4-methyl-2-oxopentanoate + CO2 + NADH</text>
        <dbReference type="Rhea" id="RHEA:32271"/>
        <dbReference type="ChEBI" id="CHEBI:16526"/>
        <dbReference type="ChEBI" id="CHEBI:17865"/>
        <dbReference type="ChEBI" id="CHEBI:35121"/>
        <dbReference type="ChEBI" id="CHEBI:57540"/>
        <dbReference type="ChEBI" id="CHEBI:57945"/>
        <dbReference type="EC" id="1.1.1.85"/>
    </reaction>
</comment>
<comment type="cofactor">
    <cofactor evidence="1">
        <name>Mg(2+)</name>
        <dbReference type="ChEBI" id="CHEBI:18420"/>
    </cofactor>
    <cofactor evidence="1">
        <name>Mn(2+)</name>
        <dbReference type="ChEBI" id="CHEBI:29035"/>
    </cofactor>
    <text evidence="1">Binds 1 Mg(2+) or Mn(2+) ion per subunit.</text>
</comment>
<comment type="pathway">
    <text evidence="1">Amino-acid biosynthesis; L-leucine biosynthesis; L-leucine from 3-methyl-2-oxobutanoate: step 3/4.</text>
</comment>
<comment type="subunit">
    <text evidence="1">Homodimer.</text>
</comment>
<comment type="subcellular location">
    <subcellularLocation>
        <location evidence="1">Cytoplasm</location>
    </subcellularLocation>
</comment>
<comment type="similarity">
    <text evidence="1">Belongs to the isocitrate and isopropylmalate dehydrogenases family. LeuB type 2 subfamily.</text>
</comment>
<reference key="1">
    <citation type="journal article" date="2008" name="BMC Genomics">
        <title>Comparative genomic analysis of the gut bacterium Bifidobacterium longum reveals loci susceptible to deletion during pure culture growth.</title>
        <authorList>
            <person name="Lee J.H."/>
            <person name="Karamychev V.N."/>
            <person name="Kozyavkin S.A."/>
            <person name="Mills D."/>
            <person name="Pavlov A.R."/>
            <person name="Pavlova N.V."/>
            <person name="Polouchine N.N."/>
            <person name="Richardson P.M."/>
            <person name="Shakhova V.V."/>
            <person name="Slesarev A.I."/>
            <person name="Weimer B."/>
            <person name="O'Sullivan D.J."/>
        </authorList>
    </citation>
    <scope>NUCLEOTIDE SEQUENCE [LARGE SCALE GENOMIC DNA]</scope>
    <source>
        <strain>DJO10A</strain>
    </source>
</reference>
<dbReference type="EC" id="1.1.1.85" evidence="1"/>
<dbReference type="EMBL" id="CP000605">
    <property type="protein sequence ID" value="ACD98427.1"/>
    <property type="molecule type" value="Genomic_DNA"/>
</dbReference>
<dbReference type="RefSeq" id="WP_007051335.1">
    <property type="nucleotide sequence ID" value="NZ_AABM02000002.1"/>
</dbReference>
<dbReference type="SMR" id="B3DTF8"/>
<dbReference type="KEGG" id="blj:BLD_0981"/>
<dbReference type="HOGENOM" id="CLU_031953_0_1_11"/>
<dbReference type="UniPathway" id="UPA00048">
    <property type="reaction ID" value="UER00072"/>
</dbReference>
<dbReference type="Proteomes" id="UP000002419">
    <property type="component" value="Chromosome"/>
</dbReference>
<dbReference type="GO" id="GO:0005737">
    <property type="term" value="C:cytoplasm"/>
    <property type="evidence" value="ECO:0007669"/>
    <property type="project" value="UniProtKB-SubCell"/>
</dbReference>
<dbReference type="GO" id="GO:0003862">
    <property type="term" value="F:3-isopropylmalate dehydrogenase activity"/>
    <property type="evidence" value="ECO:0007669"/>
    <property type="project" value="UniProtKB-UniRule"/>
</dbReference>
<dbReference type="GO" id="GO:0046872">
    <property type="term" value="F:metal ion binding"/>
    <property type="evidence" value="ECO:0007669"/>
    <property type="project" value="UniProtKB-KW"/>
</dbReference>
<dbReference type="GO" id="GO:0009098">
    <property type="term" value="P:L-leucine biosynthetic process"/>
    <property type="evidence" value="ECO:0007669"/>
    <property type="project" value="UniProtKB-UniRule"/>
</dbReference>
<dbReference type="Gene3D" id="3.40.718.10">
    <property type="entry name" value="Isopropylmalate Dehydrogenase"/>
    <property type="match status" value="1"/>
</dbReference>
<dbReference type="HAMAP" id="MF_01035">
    <property type="entry name" value="LeuB_type2"/>
    <property type="match status" value="1"/>
</dbReference>
<dbReference type="InterPro" id="IPR050501">
    <property type="entry name" value="ICDH/IPMDH"/>
</dbReference>
<dbReference type="InterPro" id="IPR024084">
    <property type="entry name" value="IsoPropMal-DH-like_dom"/>
</dbReference>
<dbReference type="InterPro" id="IPR023698">
    <property type="entry name" value="LeuB_actb"/>
</dbReference>
<dbReference type="NCBIfam" id="NF002898">
    <property type="entry name" value="PRK03437.1"/>
    <property type="match status" value="1"/>
</dbReference>
<dbReference type="PANTHER" id="PTHR43275">
    <property type="entry name" value="D-MALATE DEHYDROGENASE [DECARBOXYLATING]"/>
    <property type="match status" value="1"/>
</dbReference>
<dbReference type="PANTHER" id="PTHR43275:SF1">
    <property type="entry name" value="D-MALATE DEHYDROGENASE [DECARBOXYLATING]"/>
    <property type="match status" value="1"/>
</dbReference>
<dbReference type="Pfam" id="PF00180">
    <property type="entry name" value="Iso_dh"/>
    <property type="match status" value="1"/>
</dbReference>
<dbReference type="SMART" id="SM01329">
    <property type="entry name" value="Iso_dh"/>
    <property type="match status" value="1"/>
</dbReference>
<dbReference type="SUPFAM" id="SSF53659">
    <property type="entry name" value="Isocitrate/Isopropylmalate dehydrogenase-like"/>
    <property type="match status" value="1"/>
</dbReference>
<feature type="chain" id="PRO_1000135854" description="3-isopropylmalate dehydrogenase">
    <location>
        <begin position="1"/>
        <end position="343"/>
    </location>
</feature>
<feature type="binding site" evidence="1">
    <location>
        <position position="94"/>
    </location>
    <ligand>
        <name>substrate</name>
    </ligand>
</feature>
<feature type="binding site" evidence="1">
    <location>
        <position position="104"/>
    </location>
    <ligand>
        <name>substrate</name>
    </ligand>
</feature>
<feature type="binding site" evidence="1">
    <location>
        <position position="128"/>
    </location>
    <ligand>
        <name>substrate</name>
    </ligand>
</feature>
<feature type="binding site" evidence="1">
    <location>
        <position position="218"/>
    </location>
    <ligand>
        <name>Mg(2+)</name>
        <dbReference type="ChEBI" id="CHEBI:18420"/>
    </ligand>
</feature>
<feature type="binding site" evidence="1">
    <location>
        <position position="218"/>
    </location>
    <ligand>
        <name>substrate</name>
    </ligand>
</feature>
<feature type="binding site" evidence="1">
    <location>
        <position position="242"/>
    </location>
    <ligand>
        <name>Mg(2+)</name>
        <dbReference type="ChEBI" id="CHEBI:18420"/>
    </ligand>
</feature>
<feature type="binding site" evidence="1">
    <location>
        <position position="246"/>
    </location>
    <ligand>
        <name>Mg(2+)</name>
        <dbReference type="ChEBI" id="CHEBI:18420"/>
    </ligand>
</feature>
<feature type="binding site" evidence="1">
    <location>
        <begin position="278"/>
        <end position="290"/>
    </location>
    <ligand>
        <name>NAD(+)</name>
        <dbReference type="ChEBI" id="CHEBI:57540"/>
    </ligand>
</feature>
<feature type="site" description="Important for catalysis" evidence="1">
    <location>
        <position position="135"/>
    </location>
</feature>
<feature type="site" description="Important for catalysis" evidence="1">
    <location>
        <position position="185"/>
    </location>
</feature>
<organism>
    <name type="scientific">Bifidobacterium longum (strain DJO10A)</name>
    <dbReference type="NCBI Taxonomy" id="205913"/>
    <lineage>
        <taxon>Bacteria</taxon>
        <taxon>Bacillati</taxon>
        <taxon>Actinomycetota</taxon>
        <taxon>Actinomycetes</taxon>
        <taxon>Bifidobacteriales</taxon>
        <taxon>Bifidobacteriaceae</taxon>
        <taxon>Bifidobacterium</taxon>
    </lineage>
</organism>
<accession>B3DTF8</accession>